<sequence length="380" mass="42251">MALNLRKNHPLLKIINDSLVDLPTPSNISSWWNFGSLLGVCLTTQIVTGLLLATHYTADTSLAFSSVAHMCRDVQFGWLIRNLHANGASFFFICIYIHIGRGLYYGSYLNKETWNIGVVLLLTLMATAFVGYVLPWGQMSFWGATVITNLFSAIPYIGQTLVEWAWGGFSVDNPTLTRFFALHFLLPFAIAGLTLVHLTFLHETGSNNPLGIPSDCDKIPFHPYYSIKDILGFAMMIALLAALALFSPNLLGDPENFTPANPLATPPHIKPEWYFLFAYAILRSIPNKLGGVLALAASILVLFLIPLLHKSKQRSMTFRPLSQILFWALVANLLILTWVGSQPVEHPFIIIGQLASISYFTIILILFPLASMLENKLLNL</sequence>
<gene>
    <name type="primary">MT-CYB</name>
    <name type="synonym">COB</name>
    <name type="synonym">CYTB</name>
    <name type="synonym">MTCYB</name>
</gene>
<reference key="1">
    <citation type="journal article" date="2000" name="Proc. R. Soc. B">
        <title>What is not a bird of paradise? Molecular and morphological evidence places Macgregoria in the Meliphagidae and the Cnemophilinae near the base of the corvoid tree.</title>
        <authorList>
            <person name="Cracraft J."/>
            <person name="Feinstein J."/>
        </authorList>
    </citation>
    <scope>NUCLEOTIDE SEQUENCE [GENOMIC DNA]</scope>
</reference>
<proteinExistence type="inferred from homology"/>
<dbReference type="EMBL" id="AF197859">
    <property type="protein sequence ID" value="AAF13438.1"/>
    <property type="molecule type" value="Genomic_DNA"/>
</dbReference>
<dbReference type="SMR" id="Q9TAB1"/>
<dbReference type="GO" id="GO:0005743">
    <property type="term" value="C:mitochondrial inner membrane"/>
    <property type="evidence" value="ECO:0007669"/>
    <property type="project" value="UniProtKB-SubCell"/>
</dbReference>
<dbReference type="GO" id="GO:0045275">
    <property type="term" value="C:respiratory chain complex III"/>
    <property type="evidence" value="ECO:0007669"/>
    <property type="project" value="InterPro"/>
</dbReference>
<dbReference type="GO" id="GO:0046872">
    <property type="term" value="F:metal ion binding"/>
    <property type="evidence" value="ECO:0007669"/>
    <property type="project" value="UniProtKB-KW"/>
</dbReference>
<dbReference type="GO" id="GO:0008121">
    <property type="term" value="F:ubiquinol-cytochrome-c reductase activity"/>
    <property type="evidence" value="ECO:0007669"/>
    <property type="project" value="InterPro"/>
</dbReference>
<dbReference type="GO" id="GO:0006122">
    <property type="term" value="P:mitochondrial electron transport, ubiquinol to cytochrome c"/>
    <property type="evidence" value="ECO:0007669"/>
    <property type="project" value="TreeGrafter"/>
</dbReference>
<dbReference type="CDD" id="cd00290">
    <property type="entry name" value="cytochrome_b_C"/>
    <property type="match status" value="1"/>
</dbReference>
<dbReference type="CDD" id="cd00284">
    <property type="entry name" value="Cytochrome_b_N"/>
    <property type="match status" value="1"/>
</dbReference>
<dbReference type="FunFam" id="1.20.810.10:FF:000002">
    <property type="entry name" value="Cytochrome b"/>
    <property type="match status" value="1"/>
</dbReference>
<dbReference type="Gene3D" id="1.20.810.10">
    <property type="entry name" value="Cytochrome Bc1 Complex, Chain C"/>
    <property type="match status" value="1"/>
</dbReference>
<dbReference type="InterPro" id="IPR005798">
    <property type="entry name" value="Cyt_b/b6_C"/>
</dbReference>
<dbReference type="InterPro" id="IPR036150">
    <property type="entry name" value="Cyt_b/b6_C_sf"/>
</dbReference>
<dbReference type="InterPro" id="IPR005797">
    <property type="entry name" value="Cyt_b/b6_N"/>
</dbReference>
<dbReference type="InterPro" id="IPR027387">
    <property type="entry name" value="Cytb/b6-like_sf"/>
</dbReference>
<dbReference type="InterPro" id="IPR030689">
    <property type="entry name" value="Cytochrome_b"/>
</dbReference>
<dbReference type="InterPro" id="IPR048260">
    <property type="entry name" value="Cytochrome_b_C_euk/bac"/>
</dbReference>
<dbReference type="InterPro" id="IPR048259">
    <property type="entry name" value="Cytochrome_b_N_euk/bac"/>
</dbReference>
<dbReference type="InterPro" id="IPR016174">
    <property type="entry name" value="Di-haem_cyt_TM"/>
</dbReference>
<dbReference type="PANTHER" id="PTHR19271">
    <property type="entry name" value="CYTOCHROME B"/>
    <property type="match status" value="1"/>
</dbReference>
<dbReference type="PANTHER" id="PTHR19271:SF16">
    <property type="entry name" value="CYTOCHROME B"/>
    <property type="match status" value="1"/>
</dbReference>
<dbReference type="Pfam" id="PF00032">
    <property type="entry name" value="Cytochrom_B_C"/>
    <property type="match status" value="1"/>
</dbReference>
<dbReference type="Pfam" id="PF00033">
    <property type="entry name" value="Cytochrome_B"/>
    <property type="match status" value="1"/>
</dbReference>
<dbReference type="PIRSF" id="PIRSF038885">
    <property type="entry name" value="COB"/>
    <property type="match status" value="1"/>
</dbReference>
<dbReference type="SUPFAM" id="SSF81648">
    <property type="entry name" value="a domain/subunit of cytochrome bc1 complex (Ubiquinol-cytochrome c reductase)"/>
    <property type="match status" value="1"/>
</dbReference>
<dbReference type="SUPFAM" id="SSF81342">
    <property type="entry name" value="Transmembrane di-heme cytochromes"/>
    <property type="match status" value="1"/>
</dbReference>
<dbReference type="PROSITE" id="PS51003">
    <property type="entry name" value="CYTB_CTER"/>
    <property type="match status" value="1"/>
</dbReference>
<dbReference type="PROSITE" id="PS51002">
    <property type="entry name" value="CYTB_NTER"/>
    <property type="match status" value="1"/>
</dbReference>
<protein>
    <recommendedName>
        <fullName>Cytochrome b</fullName>
    </recommendedName>
    <alternativeName>
        <fullName>Complex III subunit 3</fullName>
    </alternativeName>
    <alternativeName>
        <fullName>Complex III subunit III</fullName>
    </alternativeName>
    <alternativeName>
        <fullName>Cytochrome b-c1 complex subunit 3</fullName>
    </alternativeName>
    <alternativeName>
        <fullName>Ubiquinol-cytochrome-c reductase complex cytochrome b subunit</fullName>
    </alternativeName>
</protein>
<accession>Q9TAB1</accession>
<feature type="chain" id="PRO_0000061159" description="Cytochrome b">
    <location>
        <begin position="1"/>
        <end position="380"/>
    </location>
</feature>
<feature type="transmembrane region" description="Helical" evidence="2">
    <location>
        <begin position="34"/>
        <end position="54"/>
    </location>
</feature>
<feature type="transmembrane region" description="Helical" evidence="2">
    <location>
        <begin position="78"/>
        <end position="99"/>
    </location>
</feature>
<feature type="transmembrane region" description="Helical" evidence="2">
    <location>
        <begin position="114"/>
        <end position="134"/>
    </location>
</feature>
<feature type="transmembrane region" description="Helical" evidence="2">
    <location>
        <begin position="179"/>
        <end position="199"/>
    </location>
</feature>
<feature type="transmembrane region" description="Helical" evidence="2">
    <location>
        <begin position="227"/>
        <end position="247"/>
    </location>
</feature>
<feature type="transmembrane region" description="Helical" evidence="2">
    <location>
        <begin position="289"/>
        <end position="309"/>
    </location>
</feature>
<feature type="transmembrane region" description="Helical" evidence="2">
    <location>
        <begin position="321"/>
        <end position="341"/>
    </location>
</feature>
<feature type="transmembrane region" description="Helical" evidence="2">
    <location>
        <begin position="348"/>
        <end position="368"/>
    </location>
</feature>
<feature type="binding site" description="axial binding residue" evidence="2">
    <location>
        <position position="84"/>
    </location>
    <ligand>
        <name>heme b</name>
        <dbReference type="ChEBI" id="CHEBI:60344"/>
        <label>b562</label>
    </ligand>
    <ligandPart>
        <name>Fe</name>
        <dbReference type="ChEBI" id="CHEBI:18248"/>
    </ligandPart>
</feature>
<feature type="binding site" description="axial binding residue" evidence="2">
    <location>
        <position position="98"/>
    </location>
    <ligand>
        <name>heme b</name>
        <dbReference type="ChEBI" id="CHEBI:60344"/>
        <label>b566</label>
    </ligand>
    <ligandPart>
        <name>Fe</name>
        <dbReference type="ChEBI" id="CHEBI:18248"/>
    </ligandPart>
</feature>
<feature type="binding site" description="axial binding residue" evidence="2">
    <location>
        <position position="183"/>
    </location>
    <ligand>
        <name>heme b</name>
        <dbReference type="ChEBI" id="CHEBI:60344"/>
        <label>b562</label>
    </ligand>
    <ligandPart>
        <name>Fe</name>
        <dbReference type="ChEBI" id="CHEBI:18248"/>
    </ligandPart>
</feature>
<feature type="binding site" description="axial binding residue" evidence="2">
    <location>
        <position position="197"/>
    </location>
    <ligand>
        <name>heme b</name>
        <dbReference type="ChEBI" id="CHEBI:60344"/>
        <label>b566</label>
    </ligand>
    <ligandPart>
        <name>Fe</name>
        <dbReference type="ChEBI" id="CHEBI:18248"/>
    </ligandPart>
</feature>
<feature type="binding site" evidence="2">
    <location>
        <position position="202"/>
    </location>
    <ligand>
        <name>a ubiquinone</name>
        <dbReference type="ChEBI" id="CHEBI:16389"/>
    </ligand>
</feature>
<keyword id="KW-0249">Electron transport</keyword>
<keyword id="KW-0349">Heme</keyword>
<keyword id="KW-0408">Iron</keyword>
<keyword id="KW-0472">Membrane</keyword>
<keyword id="KW-0479">Metal-binding</keyword>
<keyword id="KW-0496">Mitochondrion</keyword>
<keyword id="KW-0999">Mitochondrion inner membrane</keyword>
<keyword id="KW-0679">Respiratory chain</keyword>
<keyword id="KW-0812">Transmembrane</keyword>
<keyword id="KW-1133">Transmembrane helix</keyword>
<keyword id="KW-0813">Transport</keyword>
<keyword id="KW-0830">Ubiquinone</keyword>
<name>CYB_MANME</name>
<organism>
    <name type="scientific">Manorina melanocephala</name>
    <name type="common">Noisy miner</name>
    <dbReference type="NCBI Taxonomy" id="44314"/>
    <lineage>
        <taxon>Eukaryota</taxon>
        <taxon>Metazoa</taxon>
        <taxon>Chordata</taxon>
        <taxon>Craniata</taxon>
        <taxon>Vertebrata</taxon>
        <taxon>Euteleostomi</taxon>
        <taxon>Archelosauria</taxon>
        <taxon>Archosauria</taxon>
        <taxon>Dinosauria</taxon>
        <taxon>Saurischia</taxon>
        <taxon>Theropoda</taxon>
        <taxon>Coelurosauria</taxon>
        <taxon>Aves</taxon>
        <taxon>Neognathae</taxon>
        <taxon>Neoaves</taxon>
        <taxon>Telluraves</taxon>
        <taxon>Australaves</taxon>
        <taxon>Passeriformes</taxon>
        <taxon>Meliphagoidea</taxon>
        <taxon>Meliphagidae</taxon>
        <taxon>Manorina</taxon>
    </lineage>
</organism>
<comment type="function">
    <text evidence="2">Component of the ubiquinol-cytochrome c reductase complex (complex III or cytochrome b-c1 complex) that is part of the mitochondrial respiratory chain. The b-c1 complex mediates electron transfer from ubiquinol to cytochrome c. Contributes to the generation of a proton gradient across the mitochondrial membrane that is then used for ATP synthesis.</text>
</comment>
<comment type="cofactor">
    <cofactor evidence="2">
        <name>heme b</name>
        <dbReference type="ChEBI" id="CHEBI:60344"/>
    </cofactor>
    <text evidence="2">Binds 2 heme b groups non-covalently.</text>
</comment>
<comment type="subunit">
    <text evidence="2">The cytochrome bc1 complex contains 11 subunits: 3 respiratory subunits (MT-CYB, CYC1 and UQCRFS1), 2 core proteins (UQCRC1 and UQCRC2) and 6 low-molecular weight proteins (UQCRH/QCR6, UQCRB/QCR7, UQCRQ/QCR8, UQCR10/QCR9, UQCR11/QCR10 and a cleavage product of UQCRFS1). This cytochrome bc1 complex then forms a dimer.</text>
</comment>
<comment type="subcellular location">
    <subcellularLocation>
        <location evidence="2">Mitochondrion inner membrane</location>
        <topology evidence="2">Multi-pass membrane protein</topology>
    </subcellularLocation>
</comment>
<comment type="miscellaneous">
    <text evidence="1">Heme 1 (or BL or b562) is low-potential and absorbs at about 562 nm, and heme 2 (or BH or b566) is high-potential and absorbs at about 566 nm.</text>
</comment>
<comment type="similarity">
    <text evidence="3 4">Belongs to the cytochrome b family.</text>
</comment>
<comment type="caution">
    <text evidence="2">The full-length protein contains only eight transmembrane helices, not nine as predicted by bioinformatics tools.</text>
</comment>
<geneLocation type="mitochondrion"/>
<evidence type="ECO:0000250" key="1"/>
<evidence type="ECO:0000250" key="2">
    <source>
        <dbReference type="UniProtKB" id="P00157"/>
    </source>
</evidence>
<evidence type="ECO:0000255" key="3">
    <source>
        <dbReference type="PROSITE-ProRule" id="PRU00967"/>
    </source>
</evidence>
<evidence type="ECO:0000255" key="4">
    <source>
        <dbReference type="PROSITE-ProRule" id="PRU00968"/>
    </source>
</evidence>